<proteinExistence type="inferred from homology"/>
<gene>
    <name type="ordered locus">SAB0772</name>
</gene>
<feature type="chain" id="PRO_0000272671" description="UPF0337 protein SAB0772">
    <location>
        <begin position="1"/>
        <end position="64"/>
    </location>
</feature>
<feature type="region of interest" description="Disordered" evidence="1">
    <location>
        <begin position="1"/>
        <end position="40"/>
    </location>
</feature>
<feature type="compositionally biased region" description="Basic and acidic residues" evidence="1">
    <location>
        <begin position="25"/>
        <end position="40"/>
    </location>
</feature>
<accession>Q2YWN8</accession>
<organism>
    <name type="scientific">Staphylococcus aureus (strain bovine RF122 / ET3-1)</name>
    <dbReference type="NCBI Taxonomy" id="273036"/>
    <lineage>
        <taxon>Bacteria</taxon>
        <taxon>Bacillati</taxon>
        <taxon>Bacillota</taxon>
        <taxon>Bacilli</taxon>
        <taxon>Bacillales</taxon>
        <taxon>Staphylococcaceae</taxon>
        <taxon>Staphylococcus</taxon>
    </lineage>
</organism>
<comment type="similarity">
    <text evidence="2">Belongs to the UPF0337 (CsbD) family.</text>
</comment>
<dbReference type="EMBL" id="AJ938182">
    <property type="protein sequence ID" value="CAI80460.1"/>
    <property type="molecule type" value="Genomic_DNA"/>
</dbReference>
<dbReference type="RefSeq" id="WP_000752914.1">
    <property type="nucleotide sequence ID" value="NC_007622.1"/>
</dbReference>
<dbReference type="SMR" id="Q2YWN8"/>
<dbReference type="KEGG" id="sab:SAB0772"/>
<dbReference type="HOGENOM" id="CLU_135567_0_3_9"/>
<dbReference type="Gene3D" id="1.10.1470.10">
    <property type="entry name" value="YjbJ"/>
    <property type="match status" value="1"/>
</dbReference>
<dbReference type="InterPro" id="IPR008462">
    <property type="entry name" value="CsbD"/>
</dbReference>
<dbReference type="InterPro" id="IPR050423">
    <property type="entry name" value="UPF0337_stress_rsp"/>
</dbReference>
<dbReference type="InterPro" id="IPR036629">
    <property type="entry name" value="YjbJ_sf"/>
</dbReference>
<dbReference type="PANTHER" id="PTHR34977">
    <property type="entry name" value="UPF0337 PROTEIN YJBJ"/>
    <property type="match status" value="1"/>
</dbReference>
<dbReference type="PANTHER" id="PTHR34977:SF1">
    <property type="entry name" value="UPF0337 PROTEIN YJBJ"/>
    <property type="match status" value="1"/>
</dbReference>
<dbReference type="Pfam" id="PF05532">
    <property type="entry name" value="CsbD"/>
    <property type="match status" value="1"/>
</dbReference>
<dbReference type="SUPFAM" id="SSF69047">
    <property type="entry name" value="Hypothetical protein YjbJ"/>
    <property type="match status" value="1"/>
</dbReference>
<name>Y772_STAAB</name>
<protein>
    <recommendedName>
        <fullName>UPF0337 protein SAB0772</fullName>
    </recommendedName>
</protein>
<sequence length="64" mass="7033">MADESKFEQAKGNVKETIGNVTDNKNLENEGKEDKASGKAKEFVENAKEKATDFIDKVKGNKGE</sequence>
<evidence type="ECO:0000256" key="1">
    <source>
        <dbReference type="SAM" id="MobiDB-lite"/>
    </source>
</evidence>
<evidence type="ECO:0000305" key="2"/>
<reference key="1">
    <citation type="journal article" date="2007" name="PLoS ONE">
        <title>Molecular correlates of host specialization in Staphylococcus aureus.</title>
        <authorList>
            <person name="Herron-Olson L."/>
            <person name="Fitzgerald J.R."/>
            <person name="Musser J.M."/>
            <person name="Kapur V."/>
        </authorList>
    </citation>
    <scope>NUCLEOTIDE SEQUENCE [LARGE SCALE GENOMIC DNA]</scope>
    <source>
        <strain>bovine RF122 / ET3-1</strain>
    </source>
</reference>